<sequence length="165" mass="19252">MKTSRLPIAIQQAVMRRLREKLAQANLKLGRNYPEPKLSYTQRGTSAGTAWLESYEIRLNPVLLLENSEAFIEEVVPHELAHLLVWKHFGRVAPHGKEWKWMMESVLGVPARRTHQFELQSVRRNTFPYSCKCQEHQLTVRRHNRVVRGEAVYRCVHCGEQLVAK</sequence>
<accession>Q8XCW6</accession>
<feature type="chain" id="PRO_0000213267" description="Protein SprT">
    <location>
        <begin position="1"/>
        <end position="165"/>
    </location>
</feature>
<feature type="domain" description="SprT-like">
    <location>
        <begin position="20"/>
        <end position="163"/>
    </location>
</feature>
<feature type="active site" evidence="1">
    <location>
        <position position="79"/>
    </location>
</feature>
<feature type="binding site" evidence="1">
    <location>
        <position position="78"/>
    </location>
    <ligand>
        <name>Zn(2+)</name>
        <dbReference type="ChEBI" id="CHEBI:29105"/>
    </ligand>
</feature>
<feature type="binding site" evidence="1">
    <location>
        <position position="82"/>
    </location>
    <ligand>
        <name>Zn(2+)</name>
        <dbReference type="ChEBI" id="CHEBI:29105"/>
    </ligand>
</feature>
<dbReference type="EMBL" id="AE005174">
    <property type="protein sequence ID" value="AAG58075.1"/>
    <property type="molecule type" value="Genomic_DNA"/>
</dbReference>
<dbReference type="EMBL" id="BA000007">
    <property type="protein sequence ID" value="BAB37243.2"/>
    <property type="status" value="ALT_INIT"/>
    <property type="molecule type" value="Genomic_DNA"/>
</dbReference>
<dbReference type="PIR" id="D91106">
    <property type="entry name" value="D91106"/>
</dbReference>
<dbReference type="PIR" id="G85951">
    <property type="entry name" value="G85951"/>
</dbReference>
<dbReference type="RefSeq" id="NP_311847.1">
    <property type="nucleotide sequence ID" value="NC_002695.1"/>
</dbReference>
<dbReference type="RefSeq" id="WP_001303653.1">
    <property type="nucleotide sequence ID" value="NZ_VOAI01000003.1"/>
</dbReference>
<dbReference type="SMR" id="Q8XCW6"/>
<dbReference type="STRING" id="155864.Z4289"/>
<dbReference type="KEGG" id="ece:Z4289"/>
<dbReference type="KEGG" id="ecs:ECs_3820"/>
<dbReference type="PATRIC" id="fig|386585.9.peg.3986"/>
<dbReference type="eggNOG" id="COG3091">
    <property type="taxonomic scope" value="Bacteria"/>
</dbReference>
<dbReference type="HOGENOM" id="CLU_113336_0_1_6"/>
<dbReference type="OMA" id="QPHGEEW"/>
<dbReference type="Proteomes" id="UP000000558">
    <property type="component" value="Chromosome"/>
</dbReference>
<dbReference type="Proteomes" id="UP000002519">
    <property type="component" value="Chromosome"/>
</dbReference>
<dbReference type="GO" id="GO:0005737">
    <property type="term" value="C:cytoplasm"/>
    <property type="evidence" value="ECO:0007669"/>
    <property type="project" value="UniProtKB-SubCell"/>
</dbReference>
<dbReference type="GO" id="GO:0008270">
    <property type="term" value="F:zinc ion binding"/>
    <property type="evidence" value="ECO:0007669"/>
    <property type="project" value="UniProtKB-UniRule"/>
</dbReference>
<dbReference type="GO" id="GO:0006950">
    <property type="term" value="P:response to stress"/>
    <property type="evidence" value="ECO:0007669"/>
    <property type="project" value="UniProtKB-ARBA"/>
</dbReference>
<dbReference type="Gene3D" id="3.30.2010.10">
    <property type="entry name" value="Metalloproteases ('zincins'), catalytic domain"/>
    <property type="match status" value="1"/>
</dbReference>
<dbReference type="HAMAP" id="MF_00746">
    <property type="entry name" value="SprT"/>
    <property type="match status" value="1"/>
</dbReference>
<dbReference type="InterPro" id="IPR006640">
    <property type="entry name" value="SprT-like_domain"/>
</dbReference>
<dbReference type="InterPro" id="IPR035240">
    <property type="entry name" value="SprT_Zn_ribbon"/>
</dbReference>
<dbReference type="InterPro" id="IPR023483">
    <property type="entry name" value="Uncharacterised_SprT"/>
</dbReference>
<dbReference type="NCBIfam" id="NF003421">
    <property type="entry name" value="PRK04860.1"/>
    <property type="match status" value="1"/>
</dbReference>
<dbReference type="PANTHER" id="PTHR38773">
    <property type="entry name" value="PROTEIN SPRT"/>
    <property type="match status" value="1"/>
</dbReference>
<dbReference type="PANTHER" id="PTHR38773:SF1">
    <property type="entry name" value="PROTEIN SPRT"/>
    <property type="match status" value="1"/>
</dbReference>
<dbReference type="Pfam" id="PF10263">
    <property type="entry name" value="SprT-like"/>
    <property type="match status" value="1"/>
</dbReference>
<dbReference type="Pfam" id="PF17283">
    <property type="entry name" value="Zn_ribbon_SprT"/>
    <property type="match status" value="1"/>
</dbReference>
<dbReference type="SMART" id="SM00731">
    <property type="entry name" value="SprT"/>
    <property type="match status" value="1"/>
</dbReference>
<dbReference type="PROSITE" id="PS00142">
    <property type="entry name" value="ZINC_PROTEASE"/>
    <property type="match status" value="1"/>
</dbReference>
<comment type="cofactor">
    <cofactor evidence="2">
        <name>Zn(2+)</name>
        <dbReference type="ChEBI" id="CHEBI:29105"/>
    </cofactor>
    <text evidence="2">Binds 1 zinc ion.</text>
</comment>
<comment type="subcellular location">
    <subcellularLocation>
        <location evidence="2">Cytoplasm</location>
    </subcellularLocation>
</comment>
<comment type="similarity">
    <text evidence="2">Belongs to the SprT family.</text>
</comment>
<comment type="sequence caution" evidence="2">
    <conflict type="erroneous initiation">
        <sequence resource="EMBL-CDS" id="BAB37243"/>
    </conflict>
    <text>Truncated N-terminus.</text>
</comment>
<organism>
    <name type="scientific">Escherichia coli O157:H7</name>
    <dbReference type="NCBI Taxonomy" id="83334"/>
    <lineage>
        <taxon>Bacteria</taxon>
        <taxon>Pseudomonadati</taxon>
        <taxon>Pseudomonadota</taxon>
        <taxon>Gammaproteobacteria</taxon>
        <taxon>Enterobacterales</taxon>
        <taxon>Enterobacteriaceae</taxon>
        <taxon>Escherichia</taxon>
    </lineage>
</organism>
<evidence type="ECO:0000255" key="1"/>
<evidence type="ECO:0000305" key="2"/>
<proteinExistence type="inferred from homology"/>
<reference key="1">
    <citation type="journal article" date="2001" name="Nature">
        <title>Genome sequence of enterohaemorrhagic Escherichia coli O157:H7.</title>
        <authorList>
            <person name="Perna N.T."/>
            <person name="Plunkett G. III"/>
            <person name="Burland V."/>
            <person name="Mau B."/>
            <person name="Glasner J.D."/>
            <person name="Rose D.J."/>
            <person name="Mayhew G.F."/>
            <person name="Evans P.S."/>
            <person name="Gregor J."/>
            <person name="Kirkpatrick H.A."/>
            <person name="Posfai G."/>
            <person name="Hackett J."/>
            <person name="Klink S."/>
            <person name="Boutin A."/>
            <person name="Shao Y."/>
            <person name="Miller L."/>
            <person name="Grotbeck E.J."/>
            <person name="Davis N.W."/>
            <person name="Lim A."/>
            <person name="Dimalanta E.T."/>
            <person name="Potamousis K."/>
            <person name="Apodaca J."/>
            <person name="Anantharaman T.S."/>
            <person name="Lin J."/>
            <person name="Yen G."/>
            <person name="Schwartz D.C."/>
            <person name="Welch R.A."/>
            <person name="Blattner F.R."/>
        </authorList>
    </citation>
    <scope>NUCLEOTIDE SEQUENCE [LARGE SCALE GENOMIC DNA]</scope>
    <source>
        <strain>O157:H7 / EDL933 / ATCC 700927 / EHEC</strain>
    </source>
</reference>
<reference key="2">
    <citation type="journal article" date="2001" name="DNA Res.">
        <title>Complete genome sequence of enterohemorrhagic Escherichia coli O157:H7 and genomic comparison with a laboratory strain K-12.</title>
        <authorList>
            <person name="Hayashi T."/>
            <person name="Makino K."/>
            <person name="Ohnishi M."/>
            <person name="Kurokawa K."/>
            <person name="Ishii K."/>
            <person name="Yokoyama K."/>
            <person name="Han C.-G."/>
            <person name="Ohtsubo E."/>
            <person name="Nakayama K."/>
            <person name="Murata T."/>
            <person name="Tanaka M."/>
            <person name="Tobe T."/>
            <person name="Iida T."/>
            <person name="Takami H."/>
            <person name="Honda T."/>
            <person name="Sasakawa C."/>
            <person name="Ogasawara N."/>
            <person name="Yasunaga T."/>
            <person name="Kuhara S."/>
            <person name="Shiba T."/>
            <person name="Hattori M."/>
            <person name="Shinagawa H."/>
        </authorList>
    </citation>
    <scope>NUCLEOTIDE SEQUENCE [LARGE SCALE GENOMIC DNA]</scope>
    <source>
        <strain>O157:H7 / Sakai / RIMD 0509952 / EHEC</strain>
    </source>
</reference>
<name>SPRT_ECO57</name>
<keyword id="KW-0963">Cytoplasm</keyword>
<keyword id="KW-0479">Metal-binding</keyword>
<keyword id="KW-1185">Reference proteome</keyword>
<keyword id="KW-0862">Zinc</keyword>
<gene>
    <name type="primary">sprT</name>
    <name type="ordered locus">Z4289</name>
    <name type="ordered locus">ECs3820</name>
</gene>
<protein>
    <recommendedName>
        <fullName>Protein SprT</fullName>
    </recommendedName>
</protein>